<comment type="function">
    <text evidence="1">Involved in the transport of maltose and maltodextrins.</text>
</comment>
<comment type="catalytic activity">
    <reaction evidence="1">
        <text>beta-maltose(in) = beta-maltose(out)</text>
        <dbReference type="Rhea" id="RHEA:29731"/>
        <dbReference type="ChEBI" id="CHEBI:18147"/>
    </reaction>
</comment>
<comment type="subunit">
    <text evidence="1">Homotrimer formed of three 18-stranded antiparallel beta-barrels, containing three independent channels.</text>
</comment>
<comment type="subcellular location">
    <subcellularLocation>
        <location evidence="1">Cell outer membrane</location>
        <topology evidence="1">Multi-pass membrane protein</topology>
    </subcellularLocation>
</comment>
<comment type="induction">
    <text evidence="1">By maltose.</text>
</comment>
<comment type="similarity">
    <text evidence="1">Belongs to the porin LamB (TC 1.B.3) family.</text>
</comment>
<gene>
    <name evidence="1" type="primary">lamB</name>
    <name type="ordered locus">VCM66_A0986</name>
</gene>
<reference key="1">
    <citation type="journal article" date="2008" name="PLoS ONE">
        <title>A recalibrated molecular clock and independent origins for the cholera pandemic clones.</title>
        <authorList>
            <person name="Feng L."/>
            <person name="Reeves P.R."/>
            <person name="Lan R."/>
            <person name="Ren Y."/>
            <person name="Gao C."/>
            <person name="Zhou Z."/>
            <person name="Ren Y."/>
            <person name="Cheng J."/>
            <person name="Wang W."/>
            <person name="Wang J."/>
            <person name="Qian W."/>
            <person name="Li D."/>
            <person name="Wang L."/>
        </authorList>
    </citation>
    <scope>NUCLEOTIDE SEQUENCE [LARGE SCALE GENOMIC DNA]</scope>
    <source>
        <strain>M66-2</strain>
    </source>
</reference>
<protein>
    <recommendedName>
        <fullName evidence="1">Maltoporin</fullName>
    </recommendedName>
    <alternativeName>
        <fullName evidence="1">Maltose-inducible porin</fullName>
    </alternativeName>
</protein>
<accession>C3LWU0</accession>
<sequence length="416" mass="45011">MELTMKKVSVIAAAVAATLAAGSAFAVDFNGYFRAGTGISGNGNADQAVNKAGTGRLGNENDNYYEFGFAEELKTGEQTWKVESMIAQGNSGANGWEDGDFNVAQFNVQAKGLLASDQEAVMWAGKRYYQRKDIHITDFYFLNTSGTGGGIENLSVGNQKLSVALVQDGDNTNSSGYIFDARLANIGLWENASLELAMAYNFATEKDSKNEVADDGVLVSAILHQGLSNGFNQTVFQYGTAGYGAQAANFWGAGSYYARGTEAFNDASGFRLLNWGVINLGENWEMGHQLAYLAGSDIGGQFGGDGANKNTYTGKSFDIDQYSVVVRPMYKWNDTMRTVFEAGYNAGEKISNGGLATEDFGNAKFTVAQAWAMGDSFWARPELRVYGTYLLDTENDKAFGDDDTEFVVGIQVEAWW</sequence>
<feature type="signal peptide" evidence="1">
    <location>
        <begin position="1"/>
        <end position="26"/>
    </location>
</feature>
<feature type="chain" id="PRO_1000165295" description="Maltoporin">
    <location>
        <begin position="27"/>
        <end position="416"/>
    </location>
</feature>
<feature type="site" description="Greasy slide, important in sugar transport" evidence="1">
    <location>
        <position position="32"/>
    </location>
</feature>
<feature type="site" description="Greasy slide, important in sugar transport" evidence="1">
    <location>
        <position position="64"/>
    </location>
</feature>
<feature type="site" description="Greasy slide, important in sugar transport" evidence="1">
    <location>
        <position position="96"/>
    </location>
</feature>
<feature type="site" description="Important in sugar transport" evidence="1">
    <location>
        <position position="140"/>
    </location>
</feature>
<feature type="site" description="Greasy slide, important in sugar transport" evidence="1">
    <location>
        <position position="231"/>
    </location>
</feature>
<feature type="site" description="Greasy slide, important in sugar transport" evidence="1">
    <location>
        <position position="378"/>
    </location>
</feature>
<feature type="site" description="Greasy slide, important in sugar transport" evidence="1">
    <location>
        <position position="415"/>
    </location>
</feature>
<dbReference type="EMBL" id="CP001234">
    <property type="protein sequence ID" value="ACP07945.1"/>
    <property type="molecule type" value="Genomic_DNA"/>
</dbReference>
<dbReference type="SMR" id="C3LWU0"/>
<dbReference type="KEGG" id="vcm:VCM66_A0986"/>
<dbReference type="HOGENOM" id="CLU_032473_4_1_6"/>
<dbReference type="Proteomes" id="UP000001217">
    <property type="component" value="Chromosome II"/>
</dbReference>
<dbReference type="GO" id="GO:0009279">
    <property type="term" value="C:cell outer membrane"/>
    <property type="evidence" value="ECO:0007669"/>
    <property type="project" value="UniProtKB-SubCell"/>
</dbReference>
<dbReference type="GO" id="GO:0046930">
    <property type="term" value="C:pore complex"/>
    <property type="evidence" value="ECO:0007669"/>
    <property type="project" value="UniProtKB-KW"/>
</dbReference>
<dbReference type="GO" id="GO:0042958">
    <property type="term" value="F:maltodextrin transmembrane transporter activity"/>
    <property type="evidence" value="ECO:0007669"/>
    <property type="project" value="InterPro"/>
</dbReference>
<dbReference type="GO" id="GO:0015481">
    <property type="term" value="F:maltose transporting porin activity"/>
    <property type="evidence" value="ECO:0007669"/>
    <property type="project" value="InterPro"/>
</dbReference>
<dbReference type="GO" id="GO:0006811">
    <property type="term" value="P:monoatomic ion transport"/>
    <property type="evidence" value="ECO:0007669"/>
    <property type="project" value="UniProtKB-KW"/>
</dbReference>
<dbReference type="CDD" id="cd01346">
    <property type="entry name" value="Maltoporin-like"/>
    <property type="match status" value="1"/>
</dbReference>
<dbReference type="Gene3D" id="2.40.170.10">
    <property type="entry name" value="Porin, LamB type"/>
    <property type="match status" value="1"/>
</dbReference>
<dbReference type="HAMAP" id="MF_01301">
    <property type="entry name" value="LamB"/>
    <property type="match status" value="1"/>
</dbReference>
<dbReference type="InterPro" id="IPR050286">
    <property type="entry name" value="G_neg_Bact_CarbUptk_Porin"/>
</dbReference>
<dbReference type="InterPro" id="IPR023738">
    <property type="entry name" value="Maltoporin"/>
</dbReference>
<dbReference type="InterPro" id="IPR003192">
    <property type="entry name" value="Porin_LamB"/>
</dbReference>
<dbReference type="InterPro" id="IPR036998">
    <property type="entry name" value="Porin_LamB_sf"/>
</dbReference>
<dbReference type="NCBIfam" id="NF006860">
    <property type="entry name" value="PRK09360.1"/>
    <property type="match status" value="1"/>
</dbReference>
<dbReference type="PANTHER" id="PTHR38762">
    <property type="entry name" value="CRYPTIC OUTER MEMBRANE PORIN BGLH-RELATED"/>
    <property type="match status" value="1"/>
</dbReference>
<dbReference type="PANTHER" id="PTHR38762:SF1">
    <property type="entry name" value="CRYPTIC OUTER MEMBRANE PORIN BGLH-RELATED"/>
    <property type="match status" value="1"/>
</dbReference>
<dbReference type="Pfam" id="PF02264">
    <property type="entry name" value="LamB"/>
    <property type="match status" value="1"/>
</dbReference>
<dbReference type="SUPFAM" id="SSF56935">
    <property type="entry name" value="Porins"/>
    <property type="match status" value="1"/>
</dbReference>
<organism>
    <name type="scientific">Vibrio cholerae serotype O1 (strain M66-2)</name>
    <dbReference type="NCBI Taxonomy" id="579112"/>
    <lineage>
        <taxon>Bacteria</taxon>
        <taxon>Pseudomonadati</taxon>
        <taxon>Pseudomonadota</taxon>
        <taxon>Gammaproteobacteria</taxon>
        <taxon>Vibrionales</taxon>
        <taxon>Vibrionaceae</taxon>
        <taxon>Vibrio</taxon>
    </lineage>
</organism>
<keyword id="KW-0998">Cell outer membrane</keyword>
<keyword id="KW-0406">Ion transport</keyword>
<keyword id="KW-0472">Membrane</keyword>
<keyword id="KW-0626">Porin</keyword>
<keyword id="KW-0732">Signal</keyword>
<keyword id="KW-0762">Sugar transport</keyword>
<keyword id="KW-0812">Transmembrane</keyword>
<keyword id="KW-1134">Transmembrane beta strand</keyword>
<keyword id="KW-0813">Transport</keyword>
<name>LAMB_VIBCM</name>
<evidence type="ECO:0000255" key="1">
    <source>
        <dbReference type="HAMAP-Rule" id="MF_01301"/>
    </source>
</evidence>
<proteinExistence type="inferred from homology"/>